<feature type="chain" id="PRO_0000395885" description="Probable cystathionine beta-synthase Rv1077">
    <location>
        <begin position="1"/>
        <end position="464"/>
    </location>
</feature>
<feature type="binding site" evidence="1">
    <location>
        <position position="74"/>
    </location>
    <ligand>
        <name>pyridoxal 5'-phosphate</name>
        <dbReference type="ChEBI" id="CHEBI:597326"/>
    </ligand>
</feature>
<feature type="binding site" evidence="1">
    <location>
        <position position="269"/>
    </location>
    <ligand>
        <name>pyridoxal 5'-phosphate</name>
        <dbReference type="ChEBI" id="CHEBI:597326"/>
    </ligand>
</feature>
<feature type="modified residue" description="N6-(pyridoxal phosphate)lysine" evidence="1">
    <location>
        <position position="44"/>
    </location>
</feature>
<feature type="cross-link" description="Isoglutamyl lysine isopeptide (Lys-Gln) (interchain with Q-Cter in protein Pup)" evidence="2">
    <location>
        <position position="428"/>
    </location>
</feature>
<gene>
    <name type="primary">cbs</name>
    <name type="ordered locus">Rv1077</name>
</gene>
<protein>
    <recommendedName>
        <fullName evidence="4">Probable cystathionine beta-synthase Rv1077</fullName>
        <ecNumber>4.2.1.22</ecNumber>
    </recommendedName>
    <alternativeName>
        <fullName>Beta-thionase</fullName>
    </alternativeName>
    <alternativeName>
        <fullName>Serine sulfhydrase</fullName>
    </alternativeName>
</protein>
<dbReference type="EC" id="4.2.1.22"/>
<dbReference type="EMBL" id="AL123456">
    <property type="protein sequence ID" value="CCP43828.1"/>
    <property type="molecule type" value="Genomic_DNA"/>
</dbReference>
<dbReference type="PIR" id="C70894">
    <property type="entry name" value="C70894"/>
</dbReference>
<dbReference type="RefSeq" id="WP_003405730.1">
    <property type="nucleotide sequence ID" value="NZ_NVQJ01000072.1"/>
</dbReference>
<dbReference type="RefSeq" id="YP_177782.1">
    <property type="nucleotide sequence ID" value="NC_000962.3"/>
</dbReference>
<dbReference type="PDB" id="7XNZ">
    <property type="method" value="EM"/>
    <property type="resolution" value="3.60 A"/>
    <property type="chains" value="A/B/C/D=2-464"/>
</dbReference>
<dbReference type="PDB" id="7XOH">
    <property type="method" value="EM"/>
    <property type="resolution" value="3.60 A"/>
    <property type="chains" value="A/B/C/D=2-464"/>
</dbReference>
<dbReference type="PDB" id="7XOY">
    <property type="method" value="EM"/>
    <property type="resolution" value="4.25 A"/>
    <property type="chains" value="A/B/C/D=2-464"/>
</dbReference>
<dbReference type="PDBsum" id="7XNZ"/>
<dbReference type="PDBsum" id="7XOH"/>
<dbReference type="PDBsum" id="7XOY"/>
<dbReference type="EMDB" id="EMD-33331"/>
<dbReference type="EMDB" id="EMD-33348"/>
<dbReference type="EMDB" id="EMD-33363"/>
<dbReference type="SMR" id="P9WP51"/>
<dbReference type="FunCoup" id="P9WP51">
    <property type="interactions" value="346"/>
</dbReference>
<dbReference type="STRING" id="83332.Rv1077"/>
<dbReference type="PaxDb" id="83332-Rv1077"/>
<dbReference type="DNASU" id="887108"/>
<dbReference type="GeneID" id="887108"/>
<dbReference type="KEGG" id="mtu:Rv1077"/>
<dbReference type="KEGG" id="mtv:RVBD_1077"/>
<dbReference type="TubercuList" id="Rv1077"/>
<dbReference type="eggNOG" id="COG0031">
    <property type="taxonomic scope" value="Bacteria"/>
</dbReference>
<dbReference type="eggNOG" id="COG3620">
    <property type="taxonomic scope" value="Bacteria"/>
</dbReference>
<dbReference type="InParanoid" id="P9WP51"/>
<dbReference type="OrthoDB" id="9805733at2"/>
<dbReference type="PhylomeDB" id="P9WP51"/>
<dbReference type="Proteomes" id="UP000001584">
    <property type="component" value="Chromosome"/>
</dbReference>
<dbReference type="GO" id="GO:0005737">
    <property type="term" value="C:cytoplasm"/>
    <property type="evidence" value="ECO:0000318"/>
    <property type="project" value="GO_Central"/>
</dbReference>
<dbReference type="GO" id="GO:0005576">
    <property type="term" value="C:extracellular region"/>
    <property type="evidence" value="ECO:0007005"/>
    <property type="project" value="MTBBASE"/>
</dbReference>
<dbReference type="GO" id="GO:0009274">
    <property type="term" value="C:peptidoglycan-based cell wall"/>
    <property type="evidence" value="ECO:0007005"/>
    <property type="project" value="MTBBASE"/>
</dbReference>
<dbReference type="GO" id="GO:0005886">
    <property type="term" value="C:plasma membrane"/>
    <property type="evidence" value="ECO:0007005"/>
    <property type="project" value="MTBBASE"/>
</dbReference>
<dbReference type="GO" id="GO:0004122">
    <property type="term" value="F:cystathionine beta-synthase activity"/>
    <property type="evidence" value="ECO:0007669"/>
    <property type="project" value="UniProtKB-EC"/>
</dbReference>
<dbReference type="GO" id="GO:0004124">
    <property type="term" value="F:cysteine synthase activity"/>
    <property type="evidence" value="ECO:0000318"/>
    <property type="project" value="GO_Central"/>
</dbReference>
<dbReference type="GO" id="GO:0006535">
    <property type="term" value="P:cysteine biosynthetic process from serine"/>
    <property type="evidence" value="ECO:0000318"/>
    <property type="project" value="GO_Central"/>
</dbReference>
<dbReference type="GO" id="GO:0019343">
    <property type="term" value="P:cysteine biosynthetic process via cystathionine"/>
    <property type="evidence" value="ECO:0007669"/>
    <property type="project" value="InterPro"/>
</dbReference>
<dbReference type="CDD" id="cd01561">
    <property type="entry name" value="CBS_like"/>
    <property type="match status" value="1"/>
</dbReference>
<dbReference type="CDD" id="cd04608">
    <property type="entry name" value="CBS_pair_CBS"/>
    <property type="match status" value="1"/>
</dbReference>
<dbReference type="FunFam" id="3.40.50.1100:FF:000003">
    <property type="entry name" value="Cystathionine beta-synthase"/>
    <property type="match status" value="1"/>
</dbReference>
<dbReference type="FunFam" id="3.40.50.1100:FF:000118">
    <property type="entry name" value="Related to CYS4-cystathionine beta-synthase"/>
    <property type="match status" value="1"/>
</dbReference>
<dbReference type="Gene3D" id="3.40.50.1100">
    <property type="match status" value="2"/>
</dbReference>
<dbReference type="Gene3D" id="3.10.580.10">
    <property type="entry name" value="CBS-domain"/>
    <property type="match status" value="1"/>
</dbReference>
<dbReference type="InterPro" id="IPR046353">
    <property type="entry name" value="CBS_C"/>
</dbReference>
<dbReference type="InterPro" id="IPR000644">
    <property type="entry name" value="CBS_dom"/>
</dbReference>
<dbReference type="InterPro" id="IPR046342">
    <property type="entry name" value="CBS_dom_sf"/>
</dbReference>
<dbReference type="InterPro" id="IPR050214">
    <property type="entry name" value="Cys_Synth/Cystath_Beta-Synth"/>
</dbReference>
<dbReference type="InterPro" id="IPR005857">
    <property type="entry name" value="Cysta_beta_synth"/>
</dbReference>
<dbReference type="InterPro" id="IPR001926">
    <property type="entry name" value="TrpB-like_PALP"/>
</dbReference>
<dbReference type="InterPro" id="IPR036052">
    <property type="entry name" value="TrpB-like_PALP_sf"/>
</dbReference>
<dbReference type="NCBIfam" id="TIGR01137">
    <property type="entry name" value="cysta_beta"/>
    <property type="match status" value="1"/>
</dbReference>
<dbReference type="PANTHER" id="PTHR10314">
    <property type="entry name" value="CYSTATHIONINE BETA-SYNTHASE"/>
    <property type="match status" value="1"/>
</dbReference>
<dbReference type="Pfam" id="PF00571">
    <property type="entry name" value="CBS"/>
    <property type="match status" value="2"/>
</dbReference>
<dbReference type="Pfam" id="PF00291">
    <property type="entry name" value="PALP"/>
    <property type="match status" value="1"/>
</dbReference>
<dbReference type="SMART" id="SM00116">
    <property type="entry name" value="CBS"/>
    <property type="match status" value="2"/>
</dbReference>
<dbReference type="SUPFAM" id="SSF54631">
    <property type="entry name" value="CBS-domain pair"/>
    <property type="match status" value="1"/>
</dbReference>
<dbReference type="SUPFAM" id="SSF53686">
    <property type="entry name" value="Tryptophan synthase beta subunit-like PLP-dependent enzymes"/>
    <property type="match status" value="1"/>
</dbReference>
<dbReference type="PROSITE" id="PS51371">
    <property type="entry name" value="CBS"/>
    <property type="match status" value="2"/>
</dbReference>
<sequence length="464" mass="48635">MRIAQHISELIGGTPLVRLNSVVPDGAGTVAAKVEYLNPGGSSKDRIAVKMIEAAEASGQLKPGGTIVEPTSGNTGVGLALVAQRRGYKCVFVCPDKVSEDKRNVLIAYGAEVVVCPTAVPPHDPASYYSVSDRLVRDIDGAWKPDQYANPEGPASHYVTTGPEIWADTEGKVTHFVAGIGTGGTITGAGRYLKEVSGGRVRIVGADPEGSVYSGGAGRPYLVEGVGEDFWPAAYDPSVPDEIIAVSDSDSFDMTRRLAREEAMLVGGSCGMAVVAALKVAEEAGPDALIVVLLPDGGRGYMSKIFNDAWMSSYGFLRSRLDGSTEQSTVGDVLRRKSGALPALVHTHPSETVRDAIGILREYGVSQMPVVGAEPPVMAGEVAGSVSERELLSAVFEGRAKLADAVSAHMSPPLRMIGAGELVSAAGKALRDWDALMVVEEGKPVGVITRYDLLGFLSEGAGRR</sequence>
<evidence type="ECO:0000250" key="1"/>
<evidence type="ECO:0000269" key="2">
    <source>
    </source>
</evidence>
<evidence type="ECO:0000269" key="3">
    <source>
    </source>
</evidence>
<evidence type="ECO:0000305" key="4"/>
<name>Y1077_MYCTU</name>
<accession>P9WP51</accession>
<accession>L0T8D3</accession>
<accession>Q79FT1</accession>
<accession>Q7D8W0</accession>
<proteinExistence type="evidence at protein level"/>
<reference key="1">
    <citation type="journal article" date="1998" name="Nature">
        <title>Deciphering the biology of Mycobacterium tuberculosis from the complete genome sequence.</title>
        <authorList>
            <person name="Cole S.T."/>
            <person name="Brosch R."/>
            <person name="Parkhill J."/>
            <person name="Garnier T."/>
            <person name="Churcher C.M."/>
            <person name="Harris D.E."/>
            <person name="Gordon S.V."/>
            <person name="Eiglmeier K."/>
            <person name="Gas S."/>
            <person name="Barry C.E. III"/>
            <person name="Tekaia F."/>
            <person name="Badcock K."/>
            <person name="Basham D."/>
            <person name="Brown D."/>
            <person name="Chillingworth T."/>
            <person name="Connor R."/>
            <person name="Davies R.M."/>
            <person name="Devlin K."/>
            <person name="Feltwell T."/>
            <person name="Gentles S."/>
            <person name="Hamlin N."/>
            <person name="Holroyd S."/>
            <person name="Hornsby T."/>
            <person name="Jagels K."/>
            <person name="Krogh A."/>
            <person name="McLean J."/>
            <person name="Moule S."/>
            <person name="Murphy L.D."/>
            <person name="Oliver S."/>
            <person name="Osborne J."/>
            <person name="Quail M.A."/>
            <person name="Rajandream M.A."/>
            <person name="Rogers J."/>
            <person name="Rutter S."/>
            <person name="Seeger K."/>
            <person name="Skelton S."/>
            <person name="Squares S."/>
            <person name="Squares R."/>
            <person name="Sulston J.E."/>
            <person name="Taylor K."/>
            <person name="Whitehead S."/>
            <person name="Barrell B.G."/>
        </authorList>
    </citation>
    <scope>NUCLEOTIDE SEQUENCE [LARGE SCALE GENOMIC DNA]</scope>
    <source>
        <strain>ATCC 25618 / H37Rv</strain>
    </source>
</reference>
<reference key="2">
    <citation type="journal article" date="2008" name="BMC Syst. Biol.">
        <title>targetTB: a target identification pipeline for Mycobacterium tuberculosis through an interactome, reactome and genome-scale structural analysis.</title>
        <authorList>
            <person name="Raman K."/>
            <person name="Yeturu K."/>
            <person name="Chandra N."/>
        </authorList>
    </citation>
    <scope>IDENTIFICATION AS A DRUG TARGET [LARGE SCALE ANALYSIS]</scope>
</reference>
<reference key="3">
    <citation type="journal article" date="2010" name="PLoS ONE">
        <title>Prokaryotic ubiquitin-like protein (Pup) proteome of Mycobacterium tuberculosis.</title>
        <authorList>
            <person name="Festa R.A."/>
            <person name="McAllister F."/>
            <person name="Pearce M.J."/>
            <person name="Mintseris J."/>
            <person name="Burns K.E."/>
            <person name="Gygi S.P."/>
            <person name="Darwin K.H."/>
        </authorList>
    </citation>
    <scope>PUPYLATION AT LYS-428</scope>
    <scope>IDENTIFICATION BY MASS SPECTROMETRY</scope>
    <source>
        <strain>ATCC 25618 / H37Rv</strain>
    </source>
</reference>
<reference key="4">
    <citation type="journal article" date="2011" name="Mol. Cell. Proteomics">
        <title>Proteogenomic analysis of Mycobacterium tuberculosis by high resolution mass spectrometry.</title>
        <authorList>
            <person name="Kelkar D.S."/>
            <person name="Kumar D."/>
            <person name="Kumar P."/>
            <person name="Balakrishnan L."/>
            <person name="Muthusamy B."/>
            <person name="Yadav A.K."/>
            <person name="Shrivastava P."/>
            <person name="Marimuthu A."/>
            <person name="Anand S."/>
            <person name="Sundaram H."/>
            <person name="Kingsbury R."/>
            <person name="Harsha H.C."/>
            <person name="Nair B."/>
            <person name="Prasad T.S."/>
            <person name="Chauhan D.S."/>
            <person name="Katoch K."/>
            <person name="Katoch V.M."/>
            <person name="Kumar P."/>
            <person name="Chaerkady R."/>
            <person name="Ramachandran S."/>
            <person name="Dash D."/>
            <person name="Pandey A."/>
        </authorList>
    </citation>
    <scope>IDENTIFICATION BY MASS SPECTROMETRY [LARGE SCALE ANALYSIS]</scope>
    <source>
        <strain>ATCC 25618 / H37Rv</strain>
    </source>
</reference>
<reference key="5">
    <citation type="journal article" date="2021" name="Antioxidants">
        <title>Mycobacterium tuberculosis H2S Functions as a Sink to Modulate Central Metabolism, Bioenergetics, and Drug Susceptibility.</title>
        <authorList>
            <person name="Kunota T.T.R."/>
            <person name="Rahman M.A."/>
            <person name="Truebody B.E."/>
            <person name="Mackenzie J.S."/>
            <person name="Saini V."/>
            <person name="Lamprecht D.A."/>
            <person name="Adamson J.H."/>
            <person name="Sevalkar R.R."/>
            <person name="Lancaster J.R. Jr."/>
            <person name="Berney M."/>
            <person name="Glasgow J.N."/>
            <person name="Steyn A.J.C."/>
        </authorList>
    </citation>
    <scope>DISRUPTION PHENOTYPE</scope>
    <source>
        <strain>ATCC 25618 / H37Rv</strain>
    </source>
</reference>
<keyword id="KW-0002">3D-structure</keyword>
<keyword id="KW-1017">Isopeptide bond</keyword>
<keyword id="KW-0456">Lyase</keyword>
<keyword id="KW-0663">Pyridoxal phosphate</keyword>
<keyword id="KW-1185">Reference proteome</keyword>
<keyword id="KW-0832">Ubl conjugation</keyword>
<organism>
    <name type="scientific">Mycobacterium tuberculosis (strain ATCC 25618 / H37Rv)</name>
    <dbReference type="NCBI Taxonomy" id="83332"/>
    <lineage>
        <taxon>Bacteria</taxon>
        <taxon>Bacillati</taxon>
        <taxon>Actinomycetota</taxon>
        <taxon>Actinomycetes</taxon>
        <taxon>Mycobacteriales</taxon>
        <taxon>Mycobacteriaceae</taxon>
        <taxon>Mycobacterium</taxon>
        <taxon>Mycobacterium tuberculosis complex</taxon>
    </lineage>
</organism>
<comment type="catalytic activity">
    <reaction>
        <text>L-homocysteine + L-serine = L,L-cystathionine + H2O</text>
        <dbReference type="Rhea" id="RHEA:10112"/>
        <dbReference type="ChEBI" id="CHEBI:15377"/>
        <dbReference type="ChEBI" id="CHEBI:33384"/>
        <dbReference type="ChEBI" id="CHEBI:58161"/>
        <dbReference type="ChEBI" id="CHEBI:58199"/>
        <dbReference type="EC" id="4.2.1.22"/>
    </reaction>
</comment>
<comment type="cofactor">
    <cofactor evidence="1">
        <name>pyridoxal 5'-phosphate</name>
        <dbReference type="ChEBI" id="CHEBI:597326"/>
    </cofactor>
</comment>
<comment type="disruption phenotype">
    <text evidence="3">No change in H(2)S production, no change in basal oxygen consumption (respiration rate).</text>
</comment>
<comment type="miscellaneous">
    <text>Was identified as a high-confidence drug target.</text>
</comment>
<comment type="similarity">
    <text evidence="4">Belongs to the cysteine synthase/cystathionine beta-synthase family.</text>
</comment>